<sequence length="558" mass="61998">MTKYVFVTGGVVSSLGKGIAAASLAAILESRGLKVTLLKLDPYINVDPGTMSPLQHGEVFVTEDGAETDLDLGHYERFVSAKMRKSNNFTTGQIYESVISKERRGEYLGKTVQVIPHITSEIQAFVERGAKAIHDGKADVAICEIGGTVGDIESLPFLEAARQMSLRLPAHDCAFVHLTLVPYINSAGELKTKPTQHSVQKLREIGIMPTVLLCRADRPIPEDGRAKISLFSNVREEAVISVWDVDTIYKIPEMLHAQGMDDLICRELDLKAQPADLSVWAKLVYEMANPQHEVTIGMVGKYVELTESYKSLIEALRHAGIHTHTRVNINYIDSEDIEKEGVDCLQNLDAILVPGGFGKRGTEGKIAAIRYARENNVPYLGICLGMQLAVIEFARHVANLTKANSTEFDPQSDQPVVALITEWLDREGRVEKRSNDSDLGSTMRLGSQRCPVKAGTLAHRIYGAEVNERHRHRYEVNNTYVPQLERSGLIISARTPNEELPEMMELPSSMHPWFFGVQFHPEFTSTPRDGHPLFSAFISAALEHQKKLLKSKLHKGKT</sequence>
<reference key="1">
    <citation type="journal article" date="2013" name="Proc. Natl. Acad. Sci. U.S.A.">
        <title>Polynucleobacter necessarius, a model for genome reduction in both free-living and symbiotic bacteria.</title>
        <authorList>
            <person name="Boscaro V."/>
            <person name="Felletti M."/>
            <person name="Vannini C."/>
            <person name="Ackerman M.S."/>
            <person name="Chain P.S."/>
            <person name="Malfatti S."/>
            <person name="Vergez L.M."/>
            <person name="Shin M."/>
            <person name="Doak T.G."/>
            <person name="Lynch M."/>
            <person name="Petroni G."/>
        </authorList>
    </citation>
    <scope>NUCLEOTIDE SEQUENCE [LARGE SCALE GENOMIC DNA]</scope>
    <source>
        <strain>STIR1</strain>
    </source>
</reference>
<evidence type="ECO:0000255" key="1">
    <source>
        <dbReference type="HAMAP-Rule" id="MF_01227"/>
    </source>
</evidence>
<accession>B1XUS0</accession>
<proteinExistence type="inferred from homology"/>
<name>PYRG_POLNS</name>
<keyword id="KW-0067">ATP-binding</keyword>
<keyword id="KW-0315">Glutamine amidotransferase</keyword>
<keyword id="KW-0436">Ligase</keyword>
<keyword id="KW-0460">Magnesium</keyword>
<keyword id="KW-0479">Metal-binding</keyword>
<keyword id="KW-0547">Nucleotide-binding</keyword>
<keyword id="KW-0665">Pyrimidine biosynthesis</keyword>
<comment type="function">
    <text evidence="1">Catalyzes the ATP-dependent amination of UTP to CTP with either L-glutamine or ammonia as the source of nitrogen. Regulates intracellular CTP levels through interactions with the four ribonucleotide triphosphates.</text>
</comment>
<comment type="catalytic activity">
    <reaction evidence="1">
        <text>UTP + L-glutamine + ATP + H2O = CTP + L-glutamate + ADP + phosphate + 2 H(+)</text>
        <dbReference type="Rhea" id="RHEA:26426"/>
        <dbReference type="ChEBI" id="CHEBI:15377"/>
        <dbReference type="ChEBI" id="CHEBI:15378"/>
        <dbReference type="ChEBI" id="CHEBI:29985"/>
        <dbReference type="ChEBI" id="CHEBI:30616"/>
        <dbReference type="ChEBI" id="CHEBI:37563"/>
        <dbReference type="ChEBI" id="CHEBI:43474"/>
        <dbReference type="ChEBI" id="CHEBI:46398"/>
        <dbReference type="ChEBI" id="CHEBI:58359"/>
        <dbReference type="ChEBI" id="CHEBI:456216"/>
        <dbReference type="EC" id="6.3.4.2"/>
    </reaction>
</comment>
<comment type="catalytic activity">
    <reaction evidence="1">
        <text>L-glutamine + H2O = L-glutamate + NH4(+)</text>
        <dbReference type="Rhea" id="RHEA:15889"/>
        <dbReference type="ChEBI" id="CHEBI:15377"/>
        <dbReference type="ChEBI" id="CHEBI:28938"/>
        <dbReference type="ChEBI" id="CHEBI:29985"/>
        <dbReference type="ChEBI" id="CHEBI:58359"/>
    </reaction>
</comment>
<comment type="catalytic activity">
    <reaction evidence="1">
        <text>UTP + NH4(+) + ATP = CTP + ADP + phosphate + 2 H(+)</text>
        <dbReference type="Rhea" id="RHEA:16597"/>
        <dbReference type="ChEBI" id="CHEBI:15378"/>
        <dbReference type="ChEBI" id="CHEBI:28938"/>
        <dbReference type="ChEBI" id="CHEBI:30616"/>
        <dbReference type="ChEBI" id="CHEBI:37563"/>
        <dbReference type="ChEBI" id="CHEBI:43474"/>
        <dbReference type="ChEBI" id="CHEBI:46398"/>
        <dbReference type="ChEBI" id="CHEBI:456216"/>
    </reaction>
</comment>
<comment type="activity regulation">
    <text evidence="1">Allosterically activated by GTP, when glutamine is the substrate; GTP has no effect on the reaction when ammonia is the substrate. The allosteric effector GTP functions by stabilizing the protein conformation that binds the tetrahedral intermediate(s) formed during glutamine hydrolysis. Inhibited by the product CTP, via allosteric rather than competitive inhibition.</text>
</comment>
<comment type="pathway">
    <text evidence="1">Pyrimidine metabolism; CTP biosynthesis via de novo pathway; CTP from UDP: step 2/2.</text>
</comment>
<comment type="subunit">
    <text evidence="1">Homotetramer.</text>
</comment>
<comment type="miscellaneous">
    <text evidence="1">CTPSs have evolved a hybrid strategy for distinguishing between UTP and CTP. The overlapping regions of the product feedback inhibitory and substrate sites recognize a common feature in both compounds, the triphosphate moiety. To differentiate isosteric substrate and product pyrimidine rings, an additional pocket far from the expected kinase/ligase catalytic site, specifically recognizes the cytosine and ribose portions of the product inhibitor.</text>
</comment>
<comment type="similarity">
    <text evidence="1">Belongs to the CTP synthase family.</text>
</comment>
<organism>
    <name type="scientific">Polynucleobacter necessarius subsp. necessarius (strain STIR1)</name>
    <dbReference type="NCBI Taxonomy" id="452638"/>
    <lineage>
        <taxon>Bacteria</taxon>
        <taxon>Pseudomonadati</taxon>
        <taxon>Pseudomonadota</taxon>
        <taxon>Betaproteobacteria</taxon>
        <taxon>Burkholderiales</taxon>
        <taxon>Burkholderiaceae</taxon>
        <taxon>Polynucleobacter</taxon>
    </lineage>
</organism>
<protein>
    <recommendedName>
        <fullName evidence="1">CTP synthase</fullName>
        <ecNumber evidence="1">6.3.4.2</ecNumber>
    </recommendedName>
    <alternativeName>
        <fullName evidence="1">Cytidine 5'-triphosphate synthase</fullName>
    </alternativeName>
    <alternativeName>
        <fullName evidence="1">Cytidine triphosphate synthetase</fullName>
        <shortName evidence="1">CTP synthetase</shortName>
        <shortName evidence="1">CTPS</shortName>
    </alternativeName>
    <alternativeName>
        <fullName evidence="1">UTP--ammonia ligase</fullName>
    </alternativeName>
</protein>
<feature type="chain" id="PRO_1000139517" description="CTP synthase">
    <location>
        <begin position="1"/>
        <end position="558"/>
    </location>
</feature>
<feature type="domain" description="Glutamine amidotransferase type-1" evidence="1">
    <location>
        <begin position="295"/>
        <end position="547"/>
    </location>
</feature>
<feature type="region of interest" description="Amidoligase domain" evidence="1">
    <location>
        <begin position="1"/>
        <end position="270"/>
    </location>
</feature>
<feature type="active site" description="Nucleophile; for glutamine hydrolysis" evidence="1">
    <location>
        <position position="383"/>
    </location>
</feature>
<feature type="active site" evidence="1">
    <location>
        <position position="520"/>
    </location>
</feature>
<feature type="active site" evidence="1">
    <location>
        <position position="522"/>
    </location>
</feature>
<feature type="binding site" evidence="1">
    <location>
        <position position="13"/>
    </location>
    <ligand>
        <name>CTP</name>
        <dbReference type="ChEBI" id="CHEBI:37563"/>
        <note>allosteric inhibitor</note>
    </ligand>
</feature>
<feature type="binding site" evidence="1">
    <location>
        <position position="13"/>
    </location>
    <ligand>
        <name>UTP</name>
        <dbReference type="ChEBI" id="CHEBI:46398"/>
    </ligand>
</feature>
<feature type="binding site" evidence="1">
    <location>
        <begin position="14"/>
        <end position="19"/>
    </location>
    <ligand>
        <name>ATP</name>
        <dbReference type="ChEBI" id="CHEBI:30616"/>
    </ligand>
</feature>
<feature type="binding site" evidence="1">
    <location>
        <position position="71"/>
    </location>
    <ligand>
        <name>ATP</name>
        <dbReference type="ChEBI" id="CHEBI:30616"/>
    </ligand>
</feature>
<feature type="binding site" evidence="1">
    <location>
        <position position="71"/>
    </location>
    <ligand>
        <name>Mg(2+)</name>
        <dbReference type="ChEBI" id="CHEBI:18420"/>
    </ligand>
</feature>
<feature type="binding site" evidence="1">
    <location>
        <position position="144"/>
    </location>
    <ligand>
        <name>Mg(2+)</name>
        <dbReference type="ChEBI" id="CHEBI:18420"/>
    </ligand>
</feature>
<feature type="binding site" evidence="1">
    <location>
        <begin position="151"/>
        <end position="153"/>
    </location>
    <ligand>
        <name>CTP</name>
        <dbReference type="ChEBI" id="CHEBI:37563"/>
        <note>allosteric inhibitor</note>
    </ligand>
</feature>
<feature type="binding site" evidence="1">
    <location>
        <begin position="191"/>
        <end position="196"/>
    </location>
    <ligand>
        <name>CTP</name>
        <dbReference type="ChEBI" id="CHEBI:37563"/>
        <note>allosteric inhibitor</note>
    </ligand>
</feature>
<feature type="binding site" evidence="1">
    <location>
        <begin position="191"/>
        <end position="196"/>
    </location>
    <ligand>
        <name>UTP</name>
        <dbReference type="ChEBI" id="CHEBI:46398"/>
    </ligand>
</feature>
<feature type="binding site" evidence="1">
    <location>
        <position position="227"/>
    </location>
    <ligand>
        <name>CTP</name>
        <dbReference type="ChEBI" id="CHEBI:37563"/>
        <note>allosteric inhibitor</note>
    </ligand>
</feature>
<feature type="binding site" evidence="1">
    <location>
        <position position="227"/>
    </location>
    <ligand>
        <name>UTP</name>
        <dbReference type="ChEBI" id="CHEBI:46398"/>
    </ligand>
</feature>
<feature type="binding site" evidence="1">
    <location>
        <position position="356"/>
    </location>
    <ligand>
        <name>L-glutamine</name>
        <dbReference type="ChEBI" id="CHEBI:58359"/>
    </ligand>
</feature>
<feature type="binding site" evidence="1">
    <location>
        <begin position="384"/>
        <end position="387"/>
    </location>
    <ligand>
        <name>L-glutamine</name>
        <dbReference type="ChEBI" id="CHEBI:58359"/>
    </ligand>
</feature>
<feature type="binding site" evidence="1">
    <location>
        <position position="407"/>
    </location>
    <ligand>
        <name>L-glutamine</name>
        <dbReference type="ChEBI" id="CHEBI:58359"/>
    </ligand>
</feature>
<feature type="binding site" evidence="1">
    <location>
        <position position="473"/>
    </location>
    <ligand>
        <name>L-glutamine</name>
        <dbReference type="ChEBI" id="CHEBI:58359"/>
    </ligand>
</feature>
<gene>
    <name evidence="1" type="primary">pyrG</name>
    <name type="ordered locus">Pnec_0899</name>
</gene>
<dbReference type="EC" id="6.3.4.2" evidence="1"/>
<dbReference type="EMBL" id="CP001010">
    <property type="protein sequence ID" value="ACB44097.1"/>
    <property type="molecule type" value="Genomic_DNA"/>
</dbReference>
<dbReference type="SMR" id="B1XUS0"/>
<dbReference type="STRING" id="452638.Pnec_0899"/>
<dbReference type="MEROPS" id="C26.964"/>
<dbReference type="KEGG" id="pne:Pnec_0899"/>
<dbReference type="eggNOG" id="COG0504">
    <property type="taxonomic scope" value="Bacteria"/>
</dbReference>
<dbReference type="HOGENOM" id="CLU_011675_5_0_4"/>
<dbReference type="OrthoDB" id="9801107at2"/>
<dbReference type="UniPathway" id="UPA00159">
    <property type="reaction ID" value="UER00277"/>
</dbReference>
<dbReference type="GO" id="GO:0005829">
    <property type="term" value="C:cytosol"/>
    <property type="evidence" value="ECO:0007669"/>
    <property type="project" value="TreeGrafter"/>
</dbReference>
<dbReference type="GO" id="GO:0005524">
    <property type="term" value="F:ATP binding"/>
    <property type="evidence" value="ECO:0007669"/>
    <property type="project" value="UniProtKB-KW"/>
</dbReference>
<dbReference type="GO" id="GO:0003883">
    <property type="term" value="F:CTP synthase activity"/>
    <property type="evidence" value="ECO:0007669"/>
    <property type="project" value="UniProtKB-UniRule"/>
</dbReference>
<dbReference type="GO" id="GO:0004359">
    <property type="term" value="F:glutaminase activity"/>
    <property type="evidence" value="ECO:0007669"/>
    <property type="project" value="RHEA"/>
</dbReference>
<dbReference type="GO" id="GO:0042802">
    <property type="term" value="F:identical protein binding"/>
    <property type="evidence" value="ECO:0007669"/>
    <property type="project" value="TreeGrafter"/>
</dbReference>
<dbReference type="GO" id="GO:0046872">
    <property type="term" value="F:metal ion binding"/>
    <property type="evidence" value="ECO:0007669"/>
    <property type="project" value="UniProtKB-KW"/>
</dbReference>
<dbReference type="GO" id="GO:0044210">
    <property type="term" value="P:'de novo' CTP biosynthetic process"/>
    <property type="evidence" value="ECO:0007669"/>
    <property type="project" value="UniProtKB-UniRule"/>
</dbReference>
<dbReference type="GO" id="GO:0019856">
    <property type="term" value="P:pyrimidine nucleobase biosynthetic process"/>
    <property type="evidence" value="ECO:0007669"/>
    <property type="project" value="TreeGrafter"/>
</dbReference>
<dbReference type="CDD" id="cd03113">
    <property type="entry name" value="CTPS_N"/>
    <property type="match status" value="1"/>
</dbReference>
<dbReference type="CDD" id="cd01746">
    <property type="entry name" value="GATase1_CTP_Synthase"/>
    <property type="match status" value="1"/>
</dbReference>
<dbReference type="FunFam" id="3.40.50.300:FF:000009">
    <property type="entry name" value="CTP synthase"/>
    <property type="match status" value="1"/>
</dbReference>
<dbReference type="FunFam" id="3.40.50.880:FF:000002">
    <property type="entry name" value="CTP synthase"/>
    <property type="match status" value="1"/>
</dbReference>
<dbReference type="Gene3D" id="3.40.50.880">
    <property type="match status" value="1"/>
</dbReference>
<dbReference type="Gene3D" id="3.40.50.300">
    <property type="entry name" value="P-loop containing nucleotide triphosphate hydrolases"/>
    <property type="match status" value="1"/>
</dbReference>
<dbReference type="HAMAP" id="MF_01227">
    <property type="entry name" value="PyrG"/>
    <property type="match status" value="1"/>
</dbReference>
<dbReference type="InterPro" id="IPR029062">
    <property type="entry name" value="Class_I_gatase-like"/>
</dbReference>
<dbReference type="InterPro" id="IPR004468">
    <property type="entry name" value="CTP_synthase"/>
</dbReference>
<dbReference type="InterPro" id="IPR017456">
    <property type="entry name" value="CTP_synthase_N"/>
</dbReference>
<dbReference type="InterPro" id="IPR017926">
    <property type="entry name" value="GATASE"/>
</dbReference>
<dbReference type="InterPro" id="IPR033828">
    <property type="entry name" value="GATase1_CTP_Synthase"/>
</dbReference>
<dbReference type="InterPro" id="IPR027417">
    <property type="entry name" value="P-loop_NTPase"/>
</dbReference>
<dbReference type="NCBIfam" id="NF003792">
    <property type="entry name" value="PRK05380.1"/>
    <property type="match status" value="1"/>
</dbReference>
<dbReference type="NCBIfam" id="TIGR00337">
    <property type="entry name" value="PyrG"/>
    <property type="match status" value="1"/>
</dbReference>
<dbReference type="PANTHER" id="PTHR11550">
    <property type="entry name" value="CTP SYNTHASE"/>
    <property type="match status" value="1"/>
</dbReference>
<dbReference type="PANTHER" id="PTHR11550:SF0">
    <property type="entry name" value="CTP SYNTHASE-RELATED"/>
    <property type="match status" value="1"/>
</dbReference>
<dbReference type="Pfam" id="PF06418">
    <property type="entry name" value="CTP_synth_N"/>
    <property type="match status" value="1"/>
</dbReference>
<dbReference type="Pfam" id="PF00117">
    <property type="entry name" value="GATase"/>
    <property type="match status" value="1"/>
</dbReference>
<dbReference type="SUPFAM" id="SSF52317">
    <property type="entry name" value="Class I glutamine amidotransferase-like"/>
    <property type="match status" value="1"/>
</dbReference>
<dbReference type="SUPFAM" id="SSF52540">
    <property type="entry name" value="P-loop containing nucleoside triphosphate hydrolases"/>
    <property type="match status" value="1"/>
</dbReference>
<dbReference type="PROSITE" id="PS51273">
    <property type="entry name" value="GATASE_TYPE_1"/>
    <property type="match status" value="1"/>
</dbReference>